<protein>
    <recommendedName>
        <fullName evidence="1">Large ribosomal subunit protein bL17</fullName>
    </recommendedName>
    <alternativeName>
        <fullName evidence="2">50S ribosomal protein L17</fullName>
    </alternativeName>
</protein>
<evidence type="ECO:0000255" key="1">
    <source>
        <dbReference type="HAMAP-Rule" id="MF_01368"/>
    </source>
</evidence>
<evidence type="ECO:0000305" key="2"/>
<proteinExistence type="inferred from homology"/>
<accession>B2UYE0</accession>
<keyword id="KW-0687">Ribonucleoprotein</keyword>
<keyword id="KW-0689">Ribosomal protein</keyword>
<name>RL17_CLOBA</name>
<feature type="chain" id="PRO_1000144400" description="Large ribosomal subunit protein bL17">
    <location>
        <begin position="1"/>
        <end position="113"/>
    </location>
</feature>
<gene>
    <name evidence="1" type="primary">rplQ</name>
    <name type="ordered locus">CLH_0267</name>
</gene>
<organism>
    <name type="scientific">Clostridium botulinum (strain Alaska E43 / Type E3)</name>
    <dbReference type="NCBI Taxonomy" id="508767"/>
    <lineage>
        <taxon>Bacteria</taxon>
        <taxon>Bacillati</taxon>
        <taxon>Bacillota</taxon>
        <taxon>Clostridia</taxon>
        <taxon>Eubacteriales</taxon>
        <taxon>Clostridiaceae</taxon>
        <taxon>Clostridium</taxon>
    </lineage>
</organism>
<sequence length="113" mass="12796">MAGYRKLGLPTDQRRAMLRNLVTSLLKHGKIETTVTRAKETRSIAEKMITLGKRGDLHARRQALAFIQEELVVKNLFDNVAPKYAERNGGYTRMYKKGPRRGDGAEVVILELV</sequence>
<comment type="subunit">
    <text evidence="1">Part of the 50S ribosomal subunit. Contacts protein L32.</text>
</comment>
<comment type="similarity">
    <text evidence="1">Belongs to the bacterial ribosomal protein bL17 family.</text>
</comment>
<dbReference type="EMBL" id="CP001078">
    <property type="protein sequence ID" value="ACD52308.1"/>
    <property type="molecule type" value="Genomic_DNA"/>
</dbReference>
<dbReference type="RefSeq" id="WP_003370841.1">
    <property type="nucleotide sequence ID" value="NC_010723.1"/>
</dbReference>
<dbReference type="SMR" id="B2UYE0"/>
<dbReference type="KEGG" id="cbt:CLH_0267"/>
<dbReference type="HOGENOM" id="CLU_074407_2_2_9"/>
<dbReference type="GO" id="GO:0022625">
    <property type="term" value="C:cytosolic large ribosomal subunit"/>
    <property type="evidence" value="ECO:0007669"/>
    <property type="project" value="TreeGrafter"/>
</dbReference>
<dbReference type="GO" id="GO:0003735">
    <property type="term" value="F:structural constituent of ribosome"/>
    <property type="evidence" value="ECO:0007669"/>
    <property type="project" value="InterPro"/>
</dbReference>
<dbReference type="GO" id="GO:0006412">
    <property type="term" value="P:translation"/>
    <property type="evidence" value="ECO:0007669"/>
    <property type="project" value="UniProtKB-UniRule"/>
</dbReference>
<dbReference type="Gene3D" id="3.90.1030.10">
    <property type="entry name" value="Ribosomal protein L17"/>
    <property type="match status" value="1"/>
</dbReference>
<dbReference type="HAMAP" id="MF_01368">
    <property type="entry name" value="Ribosomal_bL17"/>
    <property type="match status" value="1"/>
</dbReference>
<dbReference type="InterPro" id="IPR000456">
    <property type="entry name" value="Ribosomal_bL17"/>
</dbReference>
<dbReference type="InterPro" id="IPR047859">
    <property type="entry name" value="Ribosomal_bL17_CS"/>
</dbReference>
<dbReference type="InterPro" id="IPR036373">
    <property type="entry name" value="Ribosomal_bL17_sf"/>
</dbReference>
<dbReference type="NCBIfam" id="TIGR00059">
    <property type="entry name" value="L17"/>
    <property type="match status" value="1"/>
</dbReference>
<dbReference type="PANTHER" id="PTHR14413:SF16">
    <property type="entry name" value="LARGE RIBOSOMAL SUBUNIT PROTEIN BL17M"/>
    <property type="match status" value="1"/>
</dbReference>
<dbReference type="PANTHER" id="PTHR14413">
    <property type="entry name" value="RIBOSOMAL PROTEIN L17"/>
    <property type="match status" value="1"/>
</dbReference>
<dbReference type="Pfam" id="PF01196">
    <property type="entry name" value="Ribosomal_L17"/>
    <property type="match status" value="1"/>
</dbReference>
<dbReference type="SUPFAM" id="SSF64263">
    <property type="entry name" value="Prokaryotic ribosomal protein L17"/>
    <property type="match status" value="1"/>
</dbReference>
<dbReference type="PROSITE" id="PS01167">
    <property type="entry name" value="RIBOSOMAL_L17"/>
    <property type="match status" value="1"/>
</dbReference>
<reference key="1">
    <citation type="submission" date="2008-05" db="EMBL/GenBank/DDBJ databases">
        <title>Complete genome sequence of Clostridium botulinum E3 str. Alaska E43.</title>
        <authorList>
            <person name="Brinkac L.M."/>
            <person name="Brown J.L."/>
            <person name="Bruce D."/>
            <person name="Detter C."/>
            <person name="Munk C."/>
            <person name="Smith L.A."/>
            <person name="Smith T.J."/>
            <person name="Sutton G."/>
            <person name="Brettin T.S."/>
        </authorList>
    </citation>
    <scope>NUCLEOTIDE SEQUENCE [LARGE SCALE GENOMIC DNA]</scope>
    <source>
        <strain>Alaska E43 / Type E3</strain>
    </source>
</reference>